<organism>
    <name type="scientific">Clostridium botulinum (strain Okra / Type B1)</name>
    <dbReference type="NCBI Taxonomy" id="498213"/>
    <lineage>
        <taxon>Bacteria</taxon>
        <taxon>Bacillati</taxon>
        <taxon>Bacillota</taxon>
        <taxon>Clostridia</taxon>
        <taxon>Eubacteriales</taxon>
        <taxon>Clostridiaceae</taxon>
        <taxon>Clostridium</taxon>
    </lineage>
</organism>
<comment type="function">
    <text evidence="1">Binds to the 23S rRNA.</text>
</comment>
<comment type="similarity">
    <text evidence="1">Belongs to the bacterial ribosomal protein bL9 family.</text>
</comment>
<name>RL9_CLOBK</name>
<accession>B1IHP8</accession>
<keyword id="KW-0687">Ribonucleoprotein</keyword>
<keyword id="KW-0689">Ribosomal protein</keyword>
<keyword id="KW-0694">RNA-binding</keyword>
<keyword id="KW-0699">rRNA-binding</keyword>
<feature type="chain" id="PRO_1000126892" description="Large ribosomal subunit protein bL9">
    <location>
        <begin position="1"/>
        <end position="147"/>
    </location>
</feature>
<sequence>MKVILLKDVKSLGKKGDLVNASDGYARNYLIPKKLAEQATENNVHILNNKKEAERRQKLKELEEAQKLAKSLMGKEIKFKVKIGENGRLFGSITSKDISEKLKEQYNMDIDKKKIVAETIRQTGVYEAEIKIYPEVSTKVKVSVLEE</sequence>
<gene>
    <name evidence="1" type="primary">rplI</name>
    <name type="ordered locus">CLD_0852</name>
</gene>
<protein>
    <recommendedName>
        <fullName evidence="1">Large ribosomal subunit protein bL9</fullName>
    </recommendedName>
    <alternativeName>
        <fullName evidence="2">50S ribosomal protein L9</fullName>
    </alternativeName>
</protein>
<reference key="1">
    <citation type="journal article" date="2007" name="PLoS ONE">
        <title>Analysis of the neurotoxin complex genes in Clostridium botulinum A1-A4 and B1 strains: BoNT/A3, /Ba4 and /B1 clusters are located within plasmids.</title>
        <authorList>
            <person name="Smith T.J."/>
            <person name="Hill K.K."/>
            <person name="Foley B.T."/>
            <person name="Detter J.C."/>
            <person name="Munk A.C."/>
            <person name="Bruce D.C."/>
            <person name="Doggett N.A."/>
            <person name="Smith L.A."/>
            <person name="Marks J.D."/>
            <person name="Xie G."/>
            <person name="Brettin T.S."/>
        </authorList>
    </citation>
    <scope>NUCLEOTIDE SEQUENCE [LARGE SCALE GENOMIC DNA]</scope>
    <source>
        <strain>Okra / Type B1</strain>
    </source>
</reference>
<evidence type="ECO:0000255" key="1">
    <source>
        <dbReference type="HAMAP-Rule" id="MF_00503"/>
    </source>
</evidence>
<evidence type="ECO:0000305" key="2"/>
<dbReference type="EMBL" id="CP000939">
    <property type="protein sequence ID" value="ACA44755.1"/>
    <property type="molecule type" value="Genomic_DNA"/>
</dbReference>
<dbReference type="RefSeq" id="WP_003359455.1">
    <property type="nucleotide sequence ID" value="NC_010516.1"/>
</dbReference>
<dbReference type="SMR" id="B1IHP8"/>
<dbReference type="GeneID" id="92940422"/>
<dbReference type="KEGG" id="cbb:CLD_0852"/>
<dbReference type="HOGENOM" id="CLU_078938_3_0_9"/>
<dbReference type="Proteomes" id="UP000008541">
    <property type="component" value="Chromosome"/>
</dbReference>
<dbReference type="GO" id="GO:1990904">
    <property type="term" value="C:ribonucleoprotein complex"/>
    <property type="evidence" value="ECO:0007669"/>
    <property type="project" value="UniProtKB-KW"/>
</dbReference>
<dbReference type="GO" id="GO:0005840">
    <property type="term" value="C:ribosome"/>
    <property type="evidence" value="ECO:0007669"/>
    <property type="project" value="UniProtKB-KW"/>
</dbReference>
<dbReference type="GO" id="GO:0019843">
    <property type="term" value="F:rRNA binding"/>
    <property type="evidence" value="ECO:0007669"/>
    <property type="project" value="UniProtKB-UniRule"/>
</dbReference>
<dbReference type="GO" id="GO:0003735">
    <property type="term" value="F:structural constituent of ribosome"/>
    <property type="evidence" value="ECO:0007669"/>
    <property type="project" value="InterPro"/>
</dbReference>
<dbReference type="GO" id="GO:0006412">
    <property type="term" value="P:translation"/>
    <property type="evidence" value="ECO:0007669"/>
    <property type="project" value="UniProtKB-UniRule"/>
</dbReference>
<dbReference type="FunFam" id="3.40.5.10:FF:000002">
    <property type="entry name" value="50S ribosomal protein L9"/>
    <property type="match status" value="1"/>
</dbReference>
<dbReference type="Gene3D" id="3.10.430.100">
    <property type="entry name" value="Ribosomal protein L9, C-terminal domain"/>
    <property type="match status" value="1"/>
</dbReference>
<dbReference type="Gene3D" id="3.40.5.10">
    <property type="entry name" value="Ribosomal protein L9, N-terminal domain"/>
    <property type="match status" value="1"/>
</dbReference>
<dbReference type="HAMAP" id="MF_00503">
    <property type="entry name" value="Ribosomal_bL9"/>
    <property type="match status" value="1"/>
</dbReference>
<dbReference type="InterPro" id="IPR000244">
    <property type="entry name" value="Ribosomal_bL9"/>
</dbReference>
<dbReference type="InterPro" id="IPR009027">
    <property type="entry name" value="Ribosomal_bL9/RNase_H1_N"/>
</dbReference>
<dbReference type="InterPro" id="IPR020594">
    <property type="entry name" value="Ribosomal_bL9_bac/chp"/>
</dbReference>
<dbReference type="InterPro" id="IPR020069">
    <property type="entry name" value="Ribosomal_bL9_C"/>
</dbReference>
<dbReference type="InterPro" id="IPR036791">
    <property type="entry name" value="Ribosomal_bL9_C_sf"/>
</dbReference>
<dbReference type="InterPro" id="IPR020070">
    <property type="entry name" value="Ribosomal_bL9_N"/>
</dbReference>
<dbReference type="InterPro" id="IPR036935">
    <property type="entry name" value="Ribosomal_bL9_N_sf"/>
</dbReference>
<dbReference type="NCBIfam" id="TIGR00158">
    <property type="entry name" value="L9"/>
    <property type="match status" value="1"/>
</dbReference>
<dbReference type="PANTHER" id="PTHR21368">
    <property type="entry name" value="50S RIBOSOMAL PROTEIN L9"/>
    <property type="match status" value="1"/>
</dbReference>
<dbReference type="Pfam" id="PF03948">
    <property type="entry name" value="Ribosomal_L9_C"/>
    <property type="match status" value="1"/>
</dbReference>
<dbReference type="Pfam" id="PF01281">
    <property type="entry name" value="Ribosomal_L9_N"/>
    <property type="match status" value="1"/>
</dbReference>
<dbReference type="SUPFAM" id="SSF55658">
    <property type="entry name" value="L9 N-domain-like"/>
    <property type="match status" value="1"/>
</dbReference>
<dbReference type="SUPFAM" id="SSF55653">
    <property type="entry name" value="Ribosomal protein L9 C-domain"/>
    <property type="match status" value="1"/>
</dbReference>
<dbReference type="PROSITE" id="PS00651">
    <property type="entry name" value="RIBOSOMAL_L9"/>
    <property type="match status" value="1"/>
</dbReference>
<proteinExistence type="inferred from homology"/>